<sequence>METTLLFFSQINMCESKEKTFFKLIHGSGKEETSKEAKIRAKEKRNRLSLLVQKPEFHEDTRSSRSGHLAKETRVSPEEAVKWGESFDKLLSHRDGLEAFTRFLKTEFSEENIEFWIACEDFKKSKGPQQIHLKAKAIYEKFIQTDAPKEVNLDFHTKEVITNSITQPTLHSFDAAQSRVYQLMEQDSYTRFLKSDIYLDLMEGRPQRPTNLRRRSRSFTCNEFQDVQSDVAIWL</sequence>
<comment type="function">
    <text evidence="4 5">Inhibits signal transduction by increasing the GTPase activity of G protein alpha subunits thereby driving them into their inactive GDP-bound form. Binds to G(i) alpha-1, G(i) alpha-2, G(i) alpha-3 and G(q) alpha.</text>
</comment>
<comment type="interaction">
    <interactant intactId="EBI-15933052">
        <id>Q9NS28</id>
    </interactant>
    <interactant intactId="EBI-8071125">
        <id>P59215</id>
        <label>Gnao1</label>
    </interactant>
    <organismsDiffer>true</organismsDiffer>
    <experiments>2</experiments>
</comment>
<comment type="subcellular location">
    <subcellularLocation>
        <location evidence="1">Cytoplasm</location>
    </subcellularLocation>
</comment>
<comment type="tissue specificity">
    <text evidence="4 5">Expressed in peripheral leukocytes, bone marrow, platelet, spleen and fetal liver.</text>
</comment>
<organism>
    <name type="scientific">Homo sapiens</name>
    <name type="common">Human</name>
    <dbReference type="NCBI Taxonomy" id="9606"/>
    <lineage>
        <taxon>Eukaryota</taxon>
        <taxon>Metazoa</taxon>
        <taxon>Chordata</taxon>
        <taxon>Craniata</taxon>
        <taxon>Vertebrata</taxon>
        <taxon>Euteleostomi</taxon>
        <taxon>Mammalia</taxon>
        <taxon>Eutheria</taxon>
        <taxon>Euarchontoglires</taxon>
        <taxon>Primates</taxon>
        <taxon>Haplorrhini</taxon>
        <taxon>Catarrhini</taxon>
        <taxon>Hominidae</taxon>
        <taxon>Homo</taxon>
    </lineage>
</organism>
<proteinExistence type="evidence at protein level"/>
<name>RGS18_HUMAN</name>
<gene>
    <name type="primary">RGS18</name>
    <name type="synonym">RGS13</name>
</gene>
<reference key="1">
    <citation type="submission" date="1998-07" db="EMBL/GenBank/DDBJ databases">
        <title>A novel regulator of G-protein signaling.</title>
        <authorList>
            <person name="Zhang W."/>
            <person name="Wan T."/>
            <person name="Yuan Z."/>
            <person name="He L."/>
            <person name="Cao X."/>
        </authorList>
    </citation>
    <scope>NUCLEOTIDE SEQUENCE [MRNA]</scope>
</reference>
<reference key="2">
    <citation type="journal article" date="2001" name="J. Biol. Chem.">
        <title>Molecular cloning and characterization of a novel regulator of G-protein signaling from mouse hematopoietic stem cells.</title>
        <authorList>
            <person name="Park I.K."/>
            <person name="Klug C.A."/>
            <person name="Li K."/>
            <person name="Jerabek L."/>
            <person name="Li L."/>
            <person name="Nanamori M."/>
            <person name="Neubig R.R."/>
            <person name="Hood L."/>
            <person name="Weissman I.L."/>
            <person name="Clarke M.F."/>
        </authorList>
    </citation>
    <scope>NUCLEOTIDE SEQUENCE [MRNA]</scope>
    <scope>FUNCTION</scope>
    <scope>TISSUE SPECIFICITY</scope>
</reference>
<reference key="3">
    <citation type="journal article" date="2002" name="Cell. Signal.">
        <title>Cloning and characterization of a novel regulator of G protein signalling in human platelets.</title>
        <authorList>
            <person name="Gagnon A.W."/>
            <person name="Murray D.L."/>
            <person name="Leadley R.J. Jr."/>
        </authorList>
    </citation>
    <scope>NUCLEOTIDE SEQUENCE [MRNA]</scope>
    <scope>FUNCTION</scope>
    <scope>TISSUE SPECIFICITY</scope>
    <source>
        <tissue>Platelet</tissue>
    </source>
</reference>
<reference key="4">
    <citation type="journal article" date="2004" name="Nat. Genet.">
        <title>Complete sequencing and characterization of 21,243 full-length human cDNAs.</title>
        <authorList>
            <person name="Ota T."/>
            <person name="Suzuki Y."/>
            <person name="Nishikawa T."/>
            <person name="Otsuki T."/>
            <person name="Sugiyama T."/>
            <person name="Irie R."/>
            <person name="Wakamatsu A."/>
            <person name="Hayashi K."/>
            <person name="Sato H."/>
            <person name="Nagai K."/>
            <person name="Kimura K."/>
            <person name="Makita H."/>
            <person name="Sekine M."/>
            <person name="Obayashi M."/>
            <person name="Nishi T."/>
            <person name="Shibahara T."/>
            <person name="Tanaka T."/>
            <person name="Ishii S."/>
            <person name="Yamamoto J."/>
            <person name="Saito K."/>
            <person name="Kawai Y."/>
            <person name="Isono Y."/>
            <person name="Nakamura Y."/>
            <person name="Nagahari K."/>
            <person name="Murakami K."/>
            <person name="Yasuda T."/>
            <person name="Iwayanagi T."/>
            <person name="Wagatsuma M."/>
            <person name="Shiratori A."/>
            <person name="Sudo H."/>
            <person name="Hosoiri T."/>
            <person name="Kaku Y."/>
            <person name="Kodaira H."/>
            <person name="Kondo H."/>
            <person name="Sugawara M."/>
            <person name="Takahashi M."/>
            <person name="Kanda K."/>
            <person name="Yokoi T."/>
            <person name="Furuya T."/>
            <person name="Kikkawa E."/>
            <person name="Omura Y."/>
            <person name="Abe K."/>
            <person name="Kamihara K."/>
            <person name="Katsuta N."/>
            <person name="Sato K."/>
            <person name="Tanikawa M."/>
            <person name="Yamazaki M."/>
            <person name="Ninomiya K."/>
            <person name="Ishibashi T."/>
            <person name="Yamashita H."/>
            <person name="Murakawa K."/>
            <person name="Fujimori K."/>
            <person name="Tanai H."/>
            <person name="Kimata M."/>
            <person name="Watanabe M."/>
            <person name="Hiraoka S."/>
            <person name="Chiba Y."/>
            <person name="Ishida S."/>
            <person name="Ono Y."/>
            <person name="Takiguchi S."/>
            <person name="Watanabe S."/>
            <person name="Yosida M."/>
            <person name="Hotuta T."/>
            <person name="Kusano J."/>
            <person name="Kanehori K."/>
            <person name="Takahashi-Fujii A."/>
            <person name="Hara H."/>
            <person name="Tanase T.-O."/>
            <person name="Nomura Y."/>
            <person name="Togiya S."/>
            <person name="Komai F."/>
            <person name="Hara R."/>
            <person name="Takeuchi K."/>
            <person name="Arita M."/>
            <person name="Imose N."/>
            <person name="Musashino K."/>
            <person name="Yuuki H."/>
            <person name="Oshima A."/>
            <person name="Sasaki N."/>
            <person name="Aotsuka S."/>
            <person name="Yoshikawa Y."/>
            <person name="Matsunawa H."/>
            <person name="Ichihara T."/>
            <person name="Shiohata N."/>
            <person name="Sano S."/>
            <person name="Moriya S."/>
            <person name="Momiyama H."/>
            <person name="Satoh N."/>
            <person name="Takami S."/>
            <person name="Terashima Y."/>
            <person name="Suzuki O."/>
            <person name="Nakagawa S."/>
            <person name="Senoh A."/>
            <person name="Mizoguchi H."/>
            <person name="Goto Y."/>
            <person name="Shimizu F."/>
            <person name="Wakebe H."/>
            <person name="Hishigaki H."/>
            <person name="Watanabe T."/>
            <person name="Sugiyama A."/>
            <person name="Takemoto M."/>
            <person name="Kawakami B."/>
            <person name="Yamazaki M."/>
            <person name="Watanabe K."/>
            <person name="Kumagai A."/>
            <person name="Itakura S."/>
            <person name="Fukuzumi Y."/>
            <person name="Fujimori Y."/>
            <person name="Komiyama M."/>
            <person name="Tashiro H."/>
            <person name="Tanigami A."/>
            <person name="Fujiwara T."/>
            <person name="Ono T."/>
            <person name="Yamada K."/>
            <person name="Fujii Y."/>
            <person name="Ozaki K."/>
            <person name="Hirao M."/>
            <person name="Ohmori Y."/>
            <person name="Kawabata A."/>
            <person name="Hikiji T."/>
            <person name="Kobatake N."/>
            <person name="Inagaki H."/>
            <person name="Ikema Y."/>
            <person name="Okamoto S."/>
            <person name="Okitani R."/>
            <person name="Kawakami T."/>
            <person name="Noguchi S."/>
            <person name="Itoh T."/>
            <person name="Shigeta K."/>
            <person name="Senba T."/>
            <person name="Matsumura K."/>
            <person name="Nakajima Y."/>
            <person name="Mizuno T."/>
            <person name="Morinaga M."/>
            <person name="Sasaki M."/>
            <person name="Togashi T."/>
            <person name="Oyama M."/>
            <person name="Hata H."/>
            <person name="Watanabe M."/>
            <person name="Komatsu T."/>
            <person name="Mizushima-Sugano J."/>
            <person name="Satoh T."/>
            <person name="Shirai Y."/>
            <person name="Takahashi Y."/>
            <person name="Nakagawa K."/>
            <person name="Okumura K."/>
            <person name="Nagase T."/>
            <person name="Nomura N."/>
            <person name="Kikuchi H."/>
            <person name="Masuho Y."/>
            <person name="Yamashita R."/>
            <person name="Nakai K."/>
            <person name="Yada T."/>
            <person name="Nakamura Y."/>
            <person name="Ohara O."/>
            <person name="Isogai T."/>
            <person name="Sugano S."/>
        </authorList>
    </citation>
    <scope>NUCLEOTIDE SEQUENCE [LARGE SCALE MRNA]</scope>
    <source>
        <tissue>Amygdala</tissue>
    </source>
</reference>
<reference key="5">
    <citation type="journal article" date="2006" name="Nature">
        <title>The DNA sequence and biological annotation of human chromosome 1.</title>
        <authorList>
            <person name="Gregory S.G."/>
            <person name="Barlow K.F."/>
            <person name="McLay K.E."/>
            <person name="Kaul R."/>
            <person name="Swarbreck D."/>
            <person name="Dunham A."/>
            <person name="Scott C.E."/>
            <person name="Howe K.L."/>
            <person name="Woodfine K."/>
            <person name="Spencer C.C.A."/>
            <person name="Jones M.C."/>
            <person name="Gillson C."/>
            <person name="Searle S."/>
            <person name="Zhou Y."/>
            <person name="Kokocinski F."/>
            <person name="McDonald L."/>
            <person name="Evans R."/>
            <person name="Phillips K."/>
            <person name="Atkinson A."/>
            <person name="Cooper R."/>
            <person name="Jones C."/>
            <person name="Hall R.E."/>
            <person name="Andrews T.D."/>
            <person name="Lloyd C."/>
            <person name="Ainscough R."/>
            <person name="Almeida J.P."/>
            <person name="Ambrose K.D."/>
            <person name="Anderson F."/>
            <person name="Andrew R.W."/>
            <person name="Ashwell R.I.S."/>
            <person name="Aubin K."/>
            <person name="Babbage A.K."/>
            <person name="Bagguley C.L."/>
            <person name="Bailey J."/>
            <person name="Beasley H."/>
            <person name="Bethel G."/>
            <person name="Bird C.P."/>
            <person name="Bray-Allen S."/>
            <person name="Brown J.Y."/>
            <person name="Brown A.J."/>
            <person name="Buckley D."/>
            <person name="Burton J."/>
            <person name="Bye J."/>
            <person name="Carder C."/>
            <person name="Chapman J.C."/>
            <person name="Clark S.Y."/>
            <person name="Clarke G."/>
            <person name="Clee C."/>
            <person name="Cobley V."/>
            <person name="Collier R.E."/>
            <person name="Corby N."/>
            <person name="Coville G.J."/>
            <person name="Davies J."/>
            <person name="Deadman R."/>
            <person name="Dunn M."/>
            <person name="Earthrowl M."/>
            <person name="Ellington A.G."/>
            <person name="Errington H."/>
            <person name="Frankish A."/>
            <person name="Frankland J."/>
            <person name="French L."/>
            <person name="Garner P."/>
            <person name="Garnett J."/>
            <person name="Gay L."/>
            <person name="Ghori M.R.J."/>
            <person name="Gibson R."/>
            <person name="Gilby L.M."/>
            <person name="Gillett W."/>
            <person name="Glithero R.J."/>
            <person name="Grafham D.V."/>
            <person name="Griffiths C."/>
            <person name="Griffiths-Jones S."/>
            <person name="Grocock R."/>
            <person name="Hammond S."/>
            <person name="Harrison E.S.I."/>
            <person name="Hart E."/>
            <person name="Haugen E."/>
            <person name="Heath P.D."/>
            <person name="Holmes S."/>
            <person name="Holt K."/>
            <person name="Howden P.J."/>
            <person name="Hunt A.R."/>
            <person name="Hunt S.E."/>
            <person name="Hunter G."/>
            <person name="Isherwood J."/>
            <person name="James R."/>
            <person name="Johnson C."/>
            <person name="Johnson D."/>
            <person name="Joy A."/>
            <person name="Kay M."/>
            <person name="Kershaw J.K."/>
            <person name="Kibukawa M."/>
            <person name="Kimberley A.M."/>
            <person name="King A."/>
            <person name="Knights A.J."/>
            <person name="Lad H."/>
            <person name="Laird G."/>
            <person name="Lawlor S."/>
            <person name="Leongamornlert D.A."/>
            <person name="Lloyd D.M."/>
            <person name="Loveland J."/>
            <person name="Lovell J."/>
            <person name="Lush M.J."/>
            <person name="Lyne R."/>
            <person name="Martin S."/>
            <person name="Mashreghi-Mohammadi M."/>
            <person name="Matthews L."/>
            <person name="Matthews N.S.W."/>
            <person name="McLaren S."/>
            <person name="Milne S."/>
            <person name="Mistry S."/>
            <person name="Moore M.J.F."/>
            <person name="Nickerson T."/>
            <person name="O'Dell C.N."/>
            <person name="Oliver K."/>
            <person name="Palmeiri A."/>
            <person name="Palmer S.A."/>
            <person name="Parker A."/>
            <person name="Patel D."/>
            <person name="Pearce A.V."/>
            <person name="Peck A.I."/>
            <person name="Pelan S."/>
            <person name="Phelps K."/>
            <person name="Phillimore B.J."/>
            <person name="Plumb R."/>
            <person name="Rajan J."/>
            <person name="Raymond C."/>
            <person name="Rouse G."/>
            <person name="Saenphimmachak C."/>
            <person name="Sehra H.K."/>
            <person name="Sheridan E."/>
            <person name="Shownkeen R."/>
            <person name="Sims S."/>
            <person name="Skuce C.D."/>
            <person name="Smith M."/>
            <person name="Steward C."/>
            <person name="Subramanian S."/>
            <person name="Sycamore N."/>
            <person name="Tracey A."/>
            <person name="Tromans A."/>
            <person name="Van Helmond Z."/>
            <person name="Wall M."/>
            <person name="Wallis J.M."/>
            <person name="White S."/>
            <person name="Whitehead S.L."/>
            <person name="Wilkinson J.E."/>
            <person name="Willey D.L."/>
            <person name="Williams H."/>
            <person name="Wilming L."/>
            <person name="Wray P.W."/>
            <person name="Wu Z."/>
            <person name="Coulson A."/>
            <person name="Vaudin M."/>
            <person name="Sulston J.E."/>
            <person name="Durbin R.M."/>
            <person name="Hubbard T."/>
            <person name="Wooster R."/>
            <person name="Dunham I."/>
            <person name="Carter N.P."/>
            <person name="McVean G."/>
            <person name="Ross M.T."/>
            <person name="Harrow J."/>
            <person name="Olson M.V."/>
            <person name="Beck S."/>
            <person name="Rogers J."/>
            <person name="Bentley D.R."/>
        </authorList>
    </citation>
    <scope>NUCLEOTIDE SEQUENCE [LARGE SCALE GENOMIC DNA]</scope>
</reference>
<reference key="6">
    <citation type="submission" date="2005-07" db="EMBL/GenBank/DDBJ databases">
        <authorList>
            <person name="Mural R.J."/>
            <person name="Istrail S."/>
            <person name="Sutton G.G."/>
            <person name="Florea L."/>
            <person name="Halpern A.L."/>
            <person name="Mobarry C.M."/>
            <person name="Lippert R."/>
            <person name="Walenz B."/>
            <person name="Shatkay H."/>
            <person name="Dew I."/>
            <person name="Miller J.R."/>
            <person name="Flanigan M.J."/>
            <person name="Edwards N.J."/>
            <person name="Bolanos R."/>
            <person name="Fasulo D."/>
            <person name="Halldorsson B.V."/>
            <person name="Hannenhalli S."/>
            <person name="Turner R."/>
            <person name="Yooseph S."/>
            <person name="Lu F."/>
            <person name="Nusskern D.R."/>
            <person name="Shue B.C."/>
            <person name="Zheng X.H."/>
            <person name="Zhong F."/>
            <person name="Delcher A.L."/>
            <person name="Huson D.H."/>
            <person name="Kravitz S.A."/>
            <person name="Mouchard L."/>
            <person name="Reinert K."/>
            <person name="Remington K.A."/>
            <person name="Clark A.G."/>
            <person name="Waterman M.S."/>
            <person name="Eichler E.E."/>
            <person name="Adams M.D."/>
            <person name="Hunkapiller M.W."/>
            <person name="Myers E.W."/>
            <person name="Venter J.C."/>
        </authorList>
    </citation>
    <scope>NUCLEOTIDE SEQUENCE [LARGE SCALE GENOMIC DNA]</scope>
</reference>
<reference key="7">
    <citation type="journal article" date="2004" name="Genome Res.">
        <title>The status, quality, and expansion of the NIH full-length cDNA project: the Mammalian Gene Collection (MGC).</title>
        <authorList>
            <consortium name="The MGC Project Team"/>
        </authorList>
    </citation>
    <scope>NUCLEOTIDE SEQUENCE [LARGE SCALE MRNA]</scope>
    <source>
        <tissue>Liver</tissue>
    </source>
</reference>
<reference key="8">
    <citation type="journal article" date="2004" name="Blood">
        <title>Differential proteome analysis of TRAP-activated platelets: involvement of DOK-2 and phosphorylation of RGS proteins.</title>
        <authorList>
            <person name="Garcia A."/>
            <person name="Prabhakar S."/>
            <person name="Hughan S."/>
            <person name="Anderson T.W."/>
            <person name="Brock C.J."/>
            <person name="Pearce A.C."/>
            <person name="Dwek R.A."/>
            <person name="Watson S.P."/>
            <person name="Hebestreit H.F."/>
            <person name="Zitzmann N."/>
        </authorList>
    </citation>
    <scope>PHOSPHORYLATION AT SER-49</scope>
</reference>
<reference key="9">
    <citation type="submission" date="2007-04" db="PDB data bank">
        <title>Solution structure of the RGS domain of human regulator of G-protein signaling 18.</title>
        <authorList>
            <consortium name="RIKEN structural genomics initiative (RSGI)"/>
        </authorList>
    </citation>
    <scope>STRUCTURE BY NMR OF 76-204</scope>
</reference>
<protein>
    <recommendedName>
        <fullName>Regulator of G-protein signaling 18</fullName>
        <shortName>RGS18</shortName>
    </recommendedName>
</protein>
<evidence type="ECO:0000250" key="1"/>
<evidence type="ECO:0000250" key="2">
    <source>
        <dbReference type="UniProtKB" id="Q99PG4"/>
    </source>
</evidence>
<evidence type="ECO:0000255" key="3">
    <source>
        <dbReference type="PROSITE-ProRule" id="PRU00171"/>
    </source>
</evidence>
<evidence type="ECO:0000269" key="4">
    <source>
    </source>
</evidence>
<evidence type="ECO:0000269" key="5">
    <source>
    </source>
</evidence>
<evidence type="ECO:0000269" key="6">
    <source>
    </source>
</evidence>
<evidence type="ECO:0000305" key="7"/>
<evidence type="ECO:0007829" key="8">
    <source>
        <dbReference type="PDB" id="2DLV"/>
    </source>
</evidence>
<keyword id="KW-0002">3D-structure</keyword>
<keyword id="KW-0963">Cytoplasm</keyword>
<keyword id="KW-0597">Phosphoprotein</keyword>
<keyword id="KW-1267">Proteomics identification</keyword>
<keyword id="KW-1185">Reference proteome</keyword>
<keyword id="KW-0734">Signal transduction inhibitor</keyword>
<feature type="chain" id="PRO_0000204227" description="Regulator of G-protein signaling 18">
    <location>
        <begin position="1"/>
        <end position="235"/>
    </location>
</feature>
<feature type="domain" description="RGS" evidence="3">
    <location>
        <begin position="86"/>
        <end position="202"/>
    </location>
</feature>
<feature type="modified residue" description="Phosphoserine" evidence="6">
    <location>
        <position position="49"/>
    </location>
</feature>
<feature type="modified residue" description="Phosphoserine" evidence="2">
    <location>
        <position position="216"/>
    </location>
</feature>
<feature type="modified residue" description="Phosphoserine" evidence="2">
    <location>
        <position position="218"/>
    </location>
</feature>
<feature type="sequence conflict" description="In Ref. 2." evidence="7" ref="2">
    <original>DV</original>
    <variation>ML</variation>
    <location>
        <begin position="226"/>
        <end position="227"/>
    </location>
</feature>
<feature type="helix" evidence="8">
    <location>
        <begin position="77"/>
        <end position="83"/>
    </location>
</feature>
<feature type="helix" evidence="8">
    <location>
        <begin position="87"/>
        <end position="92"/>
    </location>
</feature>
<feature type="helix" evidence="8">
    <location>
        <begin position="94"/>
        <end position="106"/>
    </location>
</feature>
<feature type="helix" evidence="8">
    <location>
        <begin position="111"/>
        <end position="122"/>
    </location>
</feature>
<feature type="helix" evidence="8">
    <location>
        <begin position="127"/>
        <end position="141"/>
    </location>
</feature>
<feature type="strand" evidence="8">
    <location>
        <begin position="144"/>
        <end position="147"/>
    </location>
</feature>
<feature type="helix" evidence="8">
    <location>
        <begin position="155"/>
        <end position="163"/>
    </location>
</feature>
<feature type="helix" evidence="8">
    <location>
        <begin position="164"/>
        <end position="166"/>
    </location>
</feature>
<feature type="turn" evidence="8">
    <location>
        <begin position="170"/>
        <end position="173"/>
    </location>
</feature>
<feature type="helix" evidence="8">
    <location>
        <begin position="174"/>
        <end position="186"/>
    </location>
</feature>
<feature type="helix" evidence="8">
    <location>
        <begin position="188"/>
        <end position="193"/>
    </location>
</feature>
<feature type="helix" evidence="8">
    <location>
        <begin position="196"/>
        <end position="202"/>
    </location>
</feature>
<dbReference type="EMBL" id="AF076642">
    <property type="protein sequence ID" value="AAF80227.1"/>
    <property type="molecule type" value="mRNA"/>
</dbReference>
<dbReference type="EMBL" id="AF268036">
    <property type="protein sequence ID" value="AAK58589.1"/>
    <property type="molecule type" value="mRNA"/>
</dbReference>
<dbReference type="EMBL" id="AL596342">
    <property type="protein sequence ID" value="CAH71160.1"/>
    <property type="molecule type" value="Genomic_DNA"/>
</dbReference>
<dbReference type="EMBL" id="AL513175">
    <property type="protein sequence ID" value="CAH71160.1"/>
    <property type="status" value="JOINED"/>
    <property type="molecule type" value="Genomic_DNA"/>
</dbReference>
<dbReference type="EMBL" id="AK315377">
    <property type="protein sequence ID" value="BAG37770.1"/>
    <property type="molecule type" value="mRNA"/>
</dbReference>
<dbReference type="EMBL" id="AL513175">
    <property type="protein sequence ID" value="CAH70529.1"/>
    <property type="molecule type" value="Genomic_DNA"/>
</dbReference>
<dbReference type="EMBL" id="AL596342">
    <property type="protein sequence ID" value="CAH70529.1"/>
    <property type="status" value="JOINED"/>
    <property type="molecule type" value="Genomic_DNA"/>
</dbReference>
<dbReference type="EMBL" id="CH471067">
    <property type="protein sequence ID" value="EAW91223.1"/>
    <property type="molecule type" value="Genomic_DNA"/>
</dbReference>
<dbReference type="EMBL" id="BC020632">
    <property type="protein sequence ID" value="AAH20632.1"/>
    <property type="molecule type" value="mRNA"/>
</dbReference>
<dbReference type="CCDS" id="CCDS1374.1"/>
<dbReference type="RefSeq" id="NP_570138.1">
    <property type="nucleotide sequence ID" value="NM_130782.3"/>
</dbReference>
<dbReference type="PDB" id="2DLV">
    <property type="method" value="NMR"/>
    <property type="chains" value="A=76-202"/>
</dbReference>
<dbReference type="PDB" id="2JM5">
    <property type="method" value="NMR"/>
    <property type="chains" value="A=75-223"/>
</dbReference>
<dbReference type="PDB" id="2OWI">
    <property type="method" value="NMR"/>
    <property type="chains" value="A=75-223"/>
</dbReference>
<dbReference type="PDBsum" id="2DLV"/>
<dbReference type="PDBsum" id="2JM5"/>
<dbReference type="PDBsum" id="2OWI"/>
<dbReference type="BMRB" id="Q9NS28"/>
<dbReference type="SMR" id="Q9NS28"/>
<dbReference type="BioGRID" id="122160">
    <property type="interactions" value="7"/>
</dbReference>
<dbReference type="DIP" id="DIP-59096N"/>
<dbReference type="FunCoup" id="Q9NS28">
    <property type="interactions" value="571"/>
</dbReference>
<dbReference type="IntAct" id="Q9NS28">
    <property type="interactions" value="1"/>
</dbReference>
<dbReference type="STRING" id="9606.ENSP00000356430"/>
<dbReference type="iPTMnet" id="Q9NS28"/>
<dbReference type="PhosphoSitePlus" id="Q9NS28"/>
<dbReference type="BioMuta" id="RGS18"/>
<dbReference type="DMDM" id="15214228"/>
<dbReference type="OGP" id="Q9NS28"/>
<dbReference type="MassIVE" id="Q9NS28"/>
<dbReference type="PaxDb" id="9606-ENSP00000356430"/>
<dbReference type="PeptideAtlas" id="Q9NS28"/>
<dbReference type="ProteomicsDB" id="82475"/>
<dbReference type="Antibodypedia" id="20616">
    <property type="antibodies" value="184 antibodies from 29 providers"/>
</dbReference>
<dbReference type="DNASU" id="64407"/>
<dbReference type="Ensembl" id="ENST00000367460.4">
    <property type="protein sequence ID" value="ENSP00000356430.3"/>
    <property type="gene ID" value="ENSG00000150681.10"/>
</dbReference>
<dbReference type="GeneID" id="64407"/>
<dbReference type="KEGG" id="hsa:64407"/>
<dbReference type="MANE-Select" id="ENST00000367460.4">
    <property type="protein sequence ID" value="ENSP00000356430.3"/>
    <property type="RefSeq nucleotide sequence ID" value="NM_130782.3"/>
    <property type="RefSeq protein sequence ID" value="NP_570138.1"/>
</dbReference>
<dbReference type="UCSC" id="uc001gsg.4">
    <property type="organism name" value="human"/>
</dbReference>
<dbReference type="AGR" id="HGNC:14261"/>
<dbReference type="CTD" id="64407"/>
<dbReference type="DisGeNET" id="64407"/>
<dbReference type="GeneCards" id="RGS18"/>
<dbReference type="HGNC" id="HGNC:14261">
    <property type="gene designation" value="RGS18"/>
</dbReference>
<dbReference type="HPA" id="ENSG00000150681">
    <property type="expression patterns" value="Tissue enhanced (bone marrow, lymphoid tissue)"/>
</dbReference>
<dbReference type="MIM" id="607192">
    <property type="type" value="gene"/>
</dbReference>
<dbReference type="neXtProt" id="NX_Q9NS28"/>
<dbReference type="OpenTargets" id="ENSG00000150681"/>
<dbReference type="PharmGKB" id="PA34369"/>
<dbReference type="VEuPathDB" id="HostDB:ENSG00000150681"/>
<dbReference type="eggNOG" id="KOG3589">
    <property type="taxonomic scope" value="Eukaryota"/>
</dbReference>
<dbReference type="GeneTree" id="ENSGT00940000161034"/>
<dbReference type="HOGENOM" id="CLU_059863_3_2_1"/>
<dbReference type="InParanoid" id="Q9NS28"/>
<dbReference type="OMA" id="TFFKLMH"/>
<dbReference type="OrthoDB" id="196547at2759"/>
<dbReference type="PAN-GO" id="Q9NS28">
    <property type="GO annotations" value="0 GO annotations based on evolutionary models"/>
</dbReference>
<dbReference type="PhylomeDB" id="Q9NS28"/>
<dbReference type="TreeFam" id="TF315837"/>
<dbReference type="PathwayCommons" id="Q9NS28"/>
<dbReference type="Reactome" id="R-HSA-416476">
    <property type="pathway name" value="G alpha (q) signalling events"/>
</dbReference>
<dbReference type="Reactome" id="R-HSA-418594">
    <property type="pathway name" value="G alpha (i) signalling events"/>
</dbReference>
<dbReference type="SignaLink" id="Q9NS28"/>
<dbReference type="SIGNOR" id="Q9NS28"/>
<dbReference type="BioGRID-ORCS" id="64407">
    <property type="hits" value="9 hits in 1134 CRISPR screens"/>
</dbReference>
<dbReference type="ChiTaRS" id="RGS18">
    <property type="organism name" value="human"/>
</dbReference>
<dbReference type="EvolutionaryTrace" id="Q9NS28"/>
<dbReference type="GeneWiki" id="RGS18"/>
<dbReference type="GenomeRNAi" id="64407"/>
<dbReference type="Pharos" id="Q9NS28">
    <property type="development level" value="Tbio"/>
</dbReference>
<dbReference type="PRO" id="PR:Q9NS28"/>
<dbReference type="Proteomes" id="UP000005640">
    <property type="component" value="Chromosome 1"/>
</dbReference>
<dbReference type="RNAct" id="Q9NS28">
    <property type="molecule type" value="protein"/>
</dbReference>
<dbReference type="Bgee" id="ENSG00000150681">
    <property type="expression patterns" value="Expressed in monocyte and 117 other cell types or tissues"/>
</dbReference>
<dbReference type="GO" id="GO:0005737">
    <property type="term" value="C:cytoplasm"/>
    <property type="evidence" value="ECO:0007669"/>
    <property type="project" value="UniProtKB-SubCell"/>
</dbReference>
<dbReference type="GO" id="GO:0005886">
    <property type="term" value="C:plasma membrane"/>
    <property type="evidence" value="ECO:0000304"/>
    <property type="project" value="Reactome"/>
</dbReference>
<dbReference type="GO" id="GO:0005096">
    <property type="term" value="F:GTPase activator activity"/>
    <property type="evidence" value="ECO:0007669"/>
    <property type="project" value="Ensembl"/>
</dbReference>
<dbReference type="GO" id="GO:0003924">
    <property type="term" value="F:GTPase activity"/>
    <property type="evidence" value="ECO:0000304"/>
    <property type="project" value="Reactome"/>
</dbReference>
<dbReference type="GO" id="GO:0007186">
    <property type="term" value="P:G protein-coupled receptor signaling pathway"/>
    <property type="evidence" value="ECO:0000304"/>
    <property type="project" value="Reactome"/>
</dbReference>
<dbReference type="GO" id="GO:0009968">
    <property type="term" value="P:negative regulation of signal transduction"/>
    <property type="evidence" value="ECO:0007669"/>
    <property type="project" value="UniProtKB-KW"/>
</dbReference>
<dbReference type="GO" id="GO:0008277">
    <property type="term" value="P:regulation of G protein-coupled receptor signaling pathway"/>
    <property type="evidence" value="ECO:0007669"/>
    <property type="project" value="Ensembl"/>
</dbReference>
<dbReference type="CDD" id="cd08712">
    <property type="entry name" value="RGS_RGS18"/>
    <property type="match status" value="1"/>
</dbReference>
<dbReference type="FunFam" id="1.10.167.10:FF:000001">
    <property type="entry name" value="Putative regulator of g-protein signaling 12"/>
    <property type="match status" value="1"/>
</dbReference>
<dbReference type="FunFam" id="1.10.196.10:FF:000001">
    <property type="entry name" value="Regulator of G-protein signaling 8"/>
    <property type="match status" value="1"/>
</dbReference>
<dbReference type="Gene3D" id="1.10.196.10">
    <property type="match status" value="1"/>
</dbReference>
<dbReference type="Gene3D" id="1.10.167.10">
    <property type="entry name" value="Regulator of G-protein Signalling 4, domain 2"/>
    <property type="match status" value="1"/>
</dbReference>
<dbReference type="InterPro" id="IPR016137">
    <property type="entry name" value="RGS"/>
</dbReference>
<dbReference type="InterPro" id="IPR036305">
    <property type="entry name" value="RGS_sf"/>
</dbReference>
<dbReference type="InterPro" id="IPR024066">
    <property type="entry name" value="RGS_subdom1/3"/>
</dbReference>
<dbReference type="InterPro" id="IPR044926">
    <property type="entry name" value="RGS_subdomain_2"/>
</dbReference>
<dbReference type="PANTHER" id="PTHR10845">
    <property type="entry name" value="REGULATOR OF G PROTEIN SIGNALING"/>
    <property type="match status" value="1"/>
</dbReference>
<dbReference type="PANTHER" id="PTHR10845:SF155">
    <property type="entry name" value="REGULATOR OF G-PROTEIN SIGNALING 18"/>
    <property type="match status" value="1"/>
</dbReference>
<dbReference type="Pfam" id="PF00615">
    <property type="entry name" value="RGS"/>
    <property type="match status" value="1"/>
</dbReference>
<dbReference type="PRINTS" id="PR01301">
    <property type="entry name" value="RGSPROTEIN"/>
</dbReference>
<dbReference type="SMART" id="SM00315">
    <property type="entry name" value="RGS"/>
    <property type="match status" value="1"/>
</dbReference>
<dbReference type="SUPFAM" id="SSF48097">
    <property type="entry name" value="Regulator of G-protein signaling, RGS"/>
    <property type="match status" value="1"/>
</dbReference>
<dbReference type="PROSITE" id="PS50132">
    <property type="entry name" value="RGS"/>
    <property type="match status" value="1"/>
</dbReference>
<accession>Q9NS28</accession>
<accession>B2RD23</accession>